<reference key="1">
    <citation type="journal article" date="2008" name="BMC Genomics">
        <title>Genomics of an extreme psychrophile, Psychromonas ingrahamii.</title>
        <authorList>
            <person name="Riley M."/>
            <person name="Staley J.T."/>
            <person name="Danchin A."/>
            <person name="Wang T.Z."/>
            <person name="Brettin T.S."/>
            <person name="Hauser L.J."/>
            <person name="Land M.L."/>
            <person name="Thompson L.S."/>
        </authorList>
    </citation>
    <scope>NUCLEOTIDE SEQUENCE [LARGE SCALE GENOMIC DNA]</scope>
    <source>
        <strain>DSM 17664 / CCUG 51855 / 37</strain>
    </source>
</reference>
<keyword id="KW-0067">ATP-binding</keyword>
<keyword id="KW-0436">Ligase</keyword>
<keyword id="KW-0460">Magnesium</keyword>
<keyword id="KW-0479">Metal-binding</keyword>
<keyword id="KW-0547">Nucleotide-binding</keyword>
<keyword id="KW-0658">Purine biosynthesis</keyword>
<keyword id="KW-1185">Reference proteome</keyword>
<evidence type="ECO:0000255" key="1">
    <source>
        <dbReference type="HAMAP-Rule" id="MF_01643"/>
    </source>
</evidence>
<name>PURT_PSYIN</name>
<gene>
    <name evidence="1" type="primary">purT</name>
    <name type="ordered locus">Ping_2234</name>
</gene>
<organism>
    <name type="scientific">Psychromonas ingrahamii (strain DSM 17664 / CCUG 51855 / 37)</name>
    <dbReference type="NCBI Taxonomy" id="357804"/>
    <lineage>
        <taxon>Bacteria</taxon>
        <taxon>Pseudomonadati</taxon>
        <taxon>Pseudomonadota</taxon>
        <taxon>Gammaproteobacteria</taxon>
        <taxon>Alteromonadales</taxon>
        <taxon>Psychromonadaceae</taxon>
        <taxon>Psychromonas</taxon>
    </lineage>
</organism>
<accession>A1SWW0</accession>
<feature type="chain" id="PRO_0000319218" description="Formate-dependent phosphoribosylglycinamide formyltransferase">
    <location>
        <begin position="1"/>
        <end position="396"/>
    </location>
</feature>
<feature type="domain" description="ATP-grasp" evidence="1">
    <location>
        <begin position="121"/>
        <end position="310"/>
    </location>
</feature>
<feature type="binding site" evidence="1">
    <location>
        <begin position="24"/>
        <end position="25"/>
    </location>
    <ligand>
        <name>N(1)-(5-phospho-beta-D-ribosyl)glycinamide</name>
        <dbReference type="ChEBI" id="CHEBI:143788"/>
    </ligand>
</feature>
<feature type="binding site" evidence="1">
    <location>
        <position position="84"/>
    </location>
    <ligand>
        <name>N(1)-(5-phospho-beta-D-ribosyl)glycinamide</name>
        <dbReference type="ChEBI" id="CHEBI:143788"/>
    </ligand>
</feature>
<feature type="binding site" evidence="1">
    <location>
        <position position="116"/>
    </location>
    <ligand>
        <name>ATP</name>
        <dbReference type="ChEBI" id="CHEBI:30616"/>
    </ligand>
</feature>
<feature type="binding site" evidence="1">
    <location>
        <position position="157"/>
    </location>
    <ligand>
        <name>ATP</name>
        <dbReference type="ChEBI" id="CHEBI:30616"/>
    </ligand>
</feature>
<feature type="binding site" evidence="1">
    <location>
        <begin position="162"/>
        <end position="167"/>
    </location>
    <ligand>
        <name>ATP</name>
        <dbReference type="ChEBI" id="CHEBI:30616"/>
    </ligand>
</feature>
<feature type="binding site" evidence="1">
    <location>
        <begin position="197"/>
        <end position="200"/>
    </location>
    <ligand>
        <name>ATP</name>
        <dbReference type="ChEBI" id="CHEBI:30616"/>
    </ligand>
</feature>
<feature type="binding site" evidence="1">
    <location>
        <position position="205"/>
    </location>
    <ligand>
        <name>ATP</name>
        <dbReference type="ChEBI" id="CHEBI:30616"/>
    </ligand>
</feature>
<feature type="binding site" evidence="1">
    <location>
        <position position="269"/>
    </location>
    <ligand>
        <name>Mg(2+)</name>
        <dbReference type="ChEBI" id="CHEBI:18420"/>
    </ligand>
</feature>
<feature type="binding site" evidence="1">
    <location>
        <position position="281"/>
    </location>
    <ligand>
        <name>Mg(2+)</name>
        <dbReference type="ChEBI" id="CHEBI:18420"/>
    </ligand>
</feature>
<feature type="binding site" evidence="1">
    <location>
        <position position="288"/>
    </location>
    <ligand>
        <name>N(1)-(5-phospho-beta-D-ribosyl)glycinamide</name>
        <dbReference type="ChEBI" id="CHEBI:143788"/>
    </ligand>
</feature>
<feature type="binding site" evidence="1">
    <location>
        <position position="359"/>
    </location>
    <ligand>
        <name>N(1)-(5-phospho-beta-D-ribosyl)glycinamide</name>
        <dbReference type="ChEBI" id="CHEBI:143788"/>
    </ligand>
</feature>
<feature type="binding site" evidence="1">
    <location>
        <begin position="366"/>
        <end position="367"/>
    </location>
    <ligand>
        <name>N(1)-(5-phospho-beta-D-ribosyl)glycinamide</name>
        <dbReference type="ChEBI" id="CHEBI:143788"/>
    </ligand>
</feature>
<proteinExistence type="inferred from homology"/>
<dbReference type="EC" id="6.3.1.21" evidence="1"/>
<dbReference type="EMBL" id="CP000510">
    <property type="protein sequence ID" value="ABM03975.1"/>
    <property type="molecule type" value="Genomic_DNA"/>
</dbReference>
<dbReference type="RefSeq" id="WP_011770535.1">
    <property type="nucleotide sequence ID" value="NC_008709.1"/>
</dbReference>
<dbReference type="SMR" id="A1SWW0"/>
<dbReference type="STRING" id="357804.Ping_2234"/>
<dbReference type="KEGG" id="pin:Ping_2234"/>
<dbReference type="eggNOG" id="COG0027">
    <property type="taxonomic scope" value="Bacteria"/>
</dbReference>
<dbReference type="HOGENOM" id="CLU_011534_1_3_6"/>
<dbReference type="UniPathway" id="UPA00074">
    <property type="reaction ID" value="UER00127"/>
</dbReference>
<dbReference type="Proteomes" id="UP000000639">
    <property type="component" value="Chromosome"/>
</dbReference>
<dbReference type="GO" id="GO:0005829">
    <property type="term" value="C:cytosol"/>
    <property type="evidence" value="ECO:0007669"/>
    <property type="project" value="TreeGrafter"/>
</dbReference>
<dbReference type="GO" id="GO:0005524">
    <property type="term" value="F:ATP binding"/>
    <property type="evidence" value="ECO:0007669"/>
    <property type="project" value="UniProtKB-UniRule"/>
</dbReference>
<dbReference type="GO" id="GO:0000287">
    <property type="term" value="F:magnesium ion binding"/>
    <property type="evidence" value="ECO:0007669"/>
    <property type="project" value="InterPro"/>
</dbReference>
<dbReference type="GO" id="GO:0043815">
    <property type="term" value="F:phosphoribosylglycinamide formyltransferase 2 activity"/>
    <property type="evidence" value="ECO:0007669"/>
    <property type="project" value="UniProtKB-UniRule"/>
</dbReference>
<dbReference type="GO" id="GO:0004644">
    <property type="term" value="F:phosphoribosylglycinamide formyltransferase activity"/>
    <property type="evidence" value="ECO:0007669"/>
    <property type="project" value="InterPro"/>
</dbReference>
<dbReference type="GO" id="GO:0006189">
    <property type="term" value="P:'de novo' IMP biosynthetic process"/>
    <property type="evidence" value="ECO:0007669"/>
    <property type="project" value="UniProtKB-UniRule"/>
</dbReference>
<dbReference type="FunFam" id="3.30.1490.20:FF:000013">
    <property type="entry name" value="Formate-dependent phosphoribosylglycinamide formyltransferase"/>
    <property type="match status" value="1"/>
</dbReference>
<dbReference type="FunFam" id="3.30.470.20:FF:000027">
    <property type="entry name" value="Formate-dependent phosphoribosylglycinamide formyltransferase"/>
    <property type="match status" value="1"/>
</dbReference>
<dbReference type="FunFam" id="3.40.50.20:FF:000007">
    <property type="entry name" value="Formate-dependent phosphoribosylglycinamide formyltransferase"/>
    <property type="match status" value="1"/>
</dbReference>
<dbReference type="Gene3D" id="3.40.50.20">
    <property type="match status" value="1"/>
</dbReference>
<dbReference type="Gene3D" id="3.30.1490.20">
    <property type="entry name" value="ATP-grasp fold, A domain"/>
    <property type="match status" value="1"/>
</dbReference>
<dbReference type="Gene3D" id="3.30.470.20">
    <property type="entry name" value="ATP-grasp fold, B domain"/>
    <property type="match status" value="1"/>
</dbReference>
<dbReference type="HAMAP" id="MF_01643">
    <property type="entry name" value="PurT"/>
    <property type="match status" value="1"/>
</dbReference>
<dbReference type="InterPro" id="IPR011761">
    <property type="entry name" value="ATP-grasp"/>
</dbReference>
<dbReference type="InterPro" id="IPR003135">
    <property type="entry name" value="ATP-grasp_carboxylate-amine"/>
</dbReference>
<dbReference type="InterPro" id="IPR013815">
    <property type="entry name" value="ATP_grasp_subdomain_1"/>
</dbReference>
<dbReference type="InterPro" id="IPR016185">
    <property type="entry name" value="PreATP-grasp_dom_sf"/>
</dbReference>
<dbReference type="InterPro" id="IPR005862">
    <property type="entry name" value="PurT"/>
</dbReference>
<dbReference type="InterPro" id="IPR054350">
    <property type="entry name" value="PurT/PurK_preATP-grasp"/>
</dbReference>
<dbReference type="InterPro" id="IPR048740">
    <property type="entry name" value="PurT_C"/>
</dbReference>
<dbReference type="InterPro" id="IPR011054">
    <property type="entry name" value="Rudment_hybrid_motif"/>
</dbReference>
<dbReference type="NCBIfam" id="NF006766">
    <property type="entry name" value="PRK09288.1"/>
    <property type="match status" value="1"/>
</dbReference>
<dbReference type="NCBIfam" id="TIGR01142">
    <property type="entry name" value="purT"/>
    <property type="match status" value="1"/>
</dbReference>
<dbReference type="PANTHER" id="PTHR43055">
    <property type="entry name" value="FORMATE-DEPENDENT PHOSPHORIBOSYLGLYCINAMIDE FORMYLTRANSFERASE"/>
    <property type="match status" value="1"/>
</dbReference>
<dbReference type="PANTHER" id="PTHR43055:SF1">
    <property type="entry name" value="FORMATE-DEPENDENT PHOSPHORIBOSYLGLYCINAMIDE FORMYLTRANSFERASE"/>
    <property type="match status" value="1"/>
</dbReference>
<dbReference type="Pfam" id="PF02222">
    <property type="entry name" value="ATP-grasp"/>
    <property type="match status" value="1"/>
</dbReference>
<dbReference type="Pfam" id="PF21244">
    <property type="entry name" value="PurT_C"/>
    <property type="match status" value="1"/>
</dbReference>
<dbReference type="Pfam" id="PF22660">
    <property type="entry name" value="RS_preATP-grasp-like"/>
    <property type="match status" value="1"/>
</dbReference>
<dbReference type="SUPFAM" id="SSF56059">
    <property type="entry name" value="Glutathione synthetase ATP-binding domain-like"/>
    <property type="match status" value="1"/>
</dbReference>
<dbReference type="SUPFAM" id="SSF52440">
    <property type="entry name" value="PreATP-grasp domain"/>
    <property type="match status" value="1"/>
</dbReference>
<dbReference type="SUPFAM" id="SSF51246">
    <property type="entry name" value="Rudiment single hybrid motif"/>
    <property type="match status" value="1"/>
</dbReference>
<dbReference type="PROSITE" id="PS50975">
    <property type="entry name" value="ATP_GRASP"/>
    <property type="match status" value="1"/>
</dbReference>
<comment type="function">
    <text evidence="1">Involved in the de novo purine biosynthesis. Catalyzes the transfer of formate to 5-phospho-ribosyl-glycinamide (GAR), producing 5-phospho-ribosyl-N-formylglycinamide (FGAR). Formate is provided by PurU via hydrolysis of 10-formyl-tetrahydrofolate.</text>
</comment>
<comment type="catalytic activity">
    <reaction evidence="1">
        <text>N(1)-(5-phospho-beta-D-ribosyl)glycinamide + formate + ATP = N(2)-formyl-N(1)-(5-phospho-beta-D-ribosyl)glycinamide + ADP + phosphate + H(+)</text>
        <dbReference type="Rhea" id="RHEA:24829"/>
        <dbReference type="ChEBI" id="CHEBI:15378"/>
        <dbReference type="ChEBI" id="CHEBI:15740"/>
        <dbReference type="ChEBI" id="CHEBI:30616"/>
        <dbReference type="ChEBI" id="CHEBI:43474"/>
        <dbReference type="ChEBI" id="CHEBI:143788"/>
        <dbReference type="ChEBI" id="CHEBI:147286"/>
        <dbReference type="ChEBI" id="CHEBI:456216"/>
        <dbReference type="EC" id="6.3.1.21"/>
    </reaction>
    <physiologicalReaction direction="left-to-right" evidence="1">
        <dbReference type="Rhea" id="RHEA:24830"/>
    </physiologicalReaction>
</comment>
<comment type="pathway">
    <text evidence="1">Purine metabolism; IMP biosynthesis via de novo pathway; N(2)-formyl-N(1)-(5-phospho-D-ribosyl)glycinamide from N(1)-(5-phospho-D-ribosyl)glycinamide (formate route): step 1/1.</text>
</comment>
<comment type="subunit">
    <text evidence="1">Homodimer.</text>
</comment>
<comment type="similarity">
    <text evidence="1">Belongs to the PurK/PurT family.</text>
</comment>
<protein>
    <recommendedName>
        <fullName evidence="1">Formate-dependent phosphoribosylglycinamide formyltransferase</fullName>
        <ecNumber evidence="1">6.3.1.21</ecNumber>
    </recommendedName>
    <alternativeName>
        <fullName evidence="1">5'-phosphoribosylglycinamide transformylase 2</fullName>
    </alternativeName>
    <alternativeName>
        <fullName evidence="1">Formate-dependent GAR transformylase</fullName>
    </alternativeName>
    <alternativeName>
        <fullName evidence="1">GAR transformylase 2</fullName>
        <shortName evidence="1">GART 2</shortName>
    </alternativeName>
    <alternativeName>
        <fullName evidence="1">Non-folate glycinamide ribonucleotide transformylase</fullName>
    </alternativeName>
    <alternativeName>
        <fullName evidence="1">Phosphoribosylglycinamide formyltransferase 2</fullName>
    </alternativeName>
</protein>
<sequence>MSVSIFGSAKANSATKALLLGSGELGKEVAIELQRFGIEVIAADSYENAPAMQVAHSSHVVSMLDGEKLATIIRAEKPDFIIPEVEAIATDTLLALEAEGFNVVPTARAAKLTMDREGIRRLAAETLGIKTSPYIFADSKEEYLSAIEKIGKPCVIKPVMSSSGKGQSIVKSAADLDNAWTYSQVGGRSGEGRIIIEGFVPFDYEITLLTVNAVDGTHFCDPIGHRQENGDYRESWQPQAMSTVALQKAQNIAKKIVTELGGYGLFGMEFFVKGDQVYFSEVSPRPHDTGLVTLVSQDASEFALHVRAILGFPIGRIIQYGPCASSVILGNGLSDDIKFTNLDQALGSVAGAQIRLFAKPDINGQRRLGVAIARGETVEEAVDNAKTVSNKVNIIY</sequence>